<gene>
    <name evidence="1" type="primary">nusB</name>
    <name type="ordered locus">BPUM_2164</name>
</gene>
<accession>A8FF16</accession>
<proteinExistence type="inferred from homology"/>
<sequence>MKRRTAREKALQTLFQIDVSNIDPKEAITHALDEQESDPFFEELVFGVLEQKDKLDDMISQHLVNWKLDRIANVDRAILRLSVYEMVYQEDIPVSVSMNEAIELAKLFGDDKAPKFVNGVLSNIKNDLKQQ</sequence>
<feature type="chain" id="PRO_1000057492" description="Transcription antitermination protein NusB">
    <location>
        <begin position="1"/>
        <end position="131"/>
    </location>
</feature>
<organism>
    <name type="scientific">Bacillus pumilus (strain SAFR-032)</name>
    <dbReference type="NCBI Taxonomy" id="315750"/>
    <lineage>
        <taxon>Bacteria</taxon>
        <taxon>Bacillati</taxon>
        <taxon>Bacillota</taxon>
        <taxon>Bacilli</taxon>
        <taxon>Bacillales</taxon>
        <taxon>Bacillaceae</taxon>
        <taxon>Bacillus</taxon>
    </lineage>
</organism>
<comment type="function">
    <text evidence="1">Involved in transcription antitermination. Required for transcription of ribosomal RNA (rRNA) genes. Binds specifically to the boxA antiterminator sequence of the ribosomal RNA (rrn) operons.</text>
</comment>
<comment type="similarity">
    <text evidence="1">Belongs to the NusB family.</text>
</comment>
<name>NUSB_BACP2</name>
<protein>
    <recommendedName>
        <fullName evidence="1">Transcription antitermination protein NusB</fullName>
    </recommendedName>
    <alternativeName>
        <fullName evidence="1">Antitermination factor NusB</fullName>
    </alternativeName>
</protein>
<keyword id="KW-0694">RNA-binding</keyword>
<keyword id="KW-0804">Transcription</keyword>
<keyword id="KW-0889">Transcription antitermination</keyword>
<keyword id="KW-0805">Transcription regulation</keyword>
<evidence type="ECO:0000255" key="1">
    <source>
        <dbReference type="HAMAP-Rule" id="MF_00073"/>
    </source>
</evidence>
<dbReference type="EMBL" id="CP000813">
    <property type="protein sequence ID" value="ABV62833.1"/>
    <property type="molecule type" value="Genomic_DNA"/>
</dbReference>
<dbReference type="RefSeq" id="WP_012010530.1">
    <property type="nucleotide sequence ID" value="NZ_VEIS01000005.1"/>
</dbReference>
<dbReference type="SMR" id="A8FF16"/>
<dbReference type="STRING" id="315750.BPUM_2164"/>
<dbReference type="GeneID" id="61769868"/>
<dbReference type="KEGG" id="bpu:BPUM_2164"/>
<dbReference type="eggNOG" id="COG0781">
    <property type="taxonomic scope" value="Bacteria"/>
</dbReference>
<dbReference type="HOGENOM" id="CLU_087843_3_3_9"/>
<dbReference type="OrthoDB" id="9811381at2"/>
<dbReference type="Proteomes" id="UP000001355">
    <property type="component" value="Chromosome"/>
</dbReference>
<dbReference type="GO" id="GO:0005829">
    <property type="term" value="C:cytosol"/>
    <property type="evidence" value="ECO:0007669"/>
    <property type="project" value="TreeGrafter"/>
</dbReference>
<dbReference type="GO" id="GO:0003723">
    <property type="term" value="F:RNA binding"/>
    <property type="evidence" value="ECO:0007669"/>
    <property type="project" value="UniProtKB-UniRule"/>
</dbReference>
<dbReference type="GO" id="GO:0006353">
    <property type="term" value="P:DNA-templated transcription termination"/>
    <property type="evidence" value="ECO:0007669"/>
    <property type="project" value="UniProtKB-UniRule"/>
</dbReference>
<dbReference type="GO" id="GO:0031564">
    <property type="term" value="P:transcription antitermination"/>
    <property type="evidence" value="ECO:0007669"/>
    <property type="project" value="UniProtKB-KW"/>
</dbReference>
<dbReference type="CDD" id="cd00619">
    <property type="entry name" value="Terminator_NusB"/>
    <property type="match status" value="1"/>
</dbReference>
<dbReference type="Gene3D" id="1.10.940.10">
    <property type="entry name" value="NusB-like"/>
    <property type="match status" value="1"/>
</dbReference>
<dbReference type="HAMAP" id="MF_00073">
    <property type="entry name" value="NusB"/>
    <property type="match status" value="1"/>
</dbReference>
<dbReference type="InterPro" id="IPR035926">
    <property type="entry name" value="NusB-like_sf"/>
</dbReference>
<dbReference type="InterPro" id="IPR011605">
    <property type="entry name" value="NusB_fam"/>
</dbReference>
<dbReference type="InterPro" id="IPR006027">
    <property type="entry name" value="NusB_RsmB_TIM44"/>
</dbReference>
<dbReference type="NCBIfam" id="TIGR01951">
    <property type="entry name" value="nusB"/>
    <property type="match status" value="1"/>
</dbReference>
<dbReference type="PANTHER" id="PTHR11078:SF3">
    <property type="entry name" value="ANTITERMINATION NUSB DOMAIN-CONTAINING PROTEIN"/>
    <property type="match status" value="1"/>
</dbReference>
<dbReference type="PANTHER" id="PTHR11078">
    <property type="entry name" value="N UTILIZATION SUBSTANCE PROTEIN B-RELATED"/>
    <property type="match status" value="1"/>
</dbReference>
<dbReference type="Pfam" id="PF01029">
    <property type="entry name" value="NusB"/>
    <property type="match status" value="1"/>
</dbReference>
<dbReference type="SUPFAM" id="SSF48013">
    <property type="entry name" value="NusB-like"/>
    <property type="match status" value="1"/>
</dbReference>
<reference key="1">
    <citation type="journal article" date="2007" name="PLoS ONE">
        <title>Paradoxical DNA repair and peroxide resistance gene conservation in Bacillus pumilus SAFR-032.</title>
        <authorList>
            <person name="Gioia J."/>
            <person name="Yerrapragada S."/>
            <person name="Qin X."/>
            <person name="Jiang H."/>
            <person name="Igboeli O.C."/>
            <person name="Muzny D."/>
            <person name="Dugan-Rocha S."/>
            <person name="Ding Y."/>
            <person name="Hawes A."/>
            <person name="Liu W."/>
            <person name="Perez L."/>
            <person name="Kovar C."/>
            <person name="Dinh H."/>
            <person name="Lee S."/>
            <person name="Nazareth L."/>
            <person name="Blyth P."/>
            <person name="Holder M."/>
            <person name="Buhay C."/>
            <person name="Tirumalai M.R."/>
            <person name="Liu Y."/>
            <person name="Dasgupta I."/>
            <person name="Bokhetache L."/>
            <person name="Fujita M."/>
            <person name="Karouia F."/>
            <person name="Eswara Moorthy P."/>
            <person name="Siefert J."/>
            <person name="Uzman A."/>
            <person name="Buzumbo P."/>
            <person name="Verma A."/>
            <person name="Zwiya H."/>
            <person name="McWilliams B.D."/>
            <person name="Olowu A."/>
            <person name="Clinkenbeard K.D."/>
            <person name="Newcombe D."/>
            <person name="Golebiewski L."/>
            <person name="Petrosino J.F."/>
            <person name="Nicholson W.L."/>
            <person name="Fox G.E."/>
            <person name="Venkateswaran K."/>
            <person name="Highlander S.K."/>
            <person name="Weinstock G.M."/>
        </authorList>
    </citation>
    <scope>NUCLEOTIDE SEQUENCE [LARGE SCALE GENOMIC DNA]</scope>
    <source>
        <strain>SAFR-032</strain>
    </source>
</reference>